<accession>C1F3N8</accession>
<sequence length="534" mass="57996">MAQIKADEITALLKEQIANYDAKVRVDEVGTVISLGDGIARLHGLDKCMAGEMLEFPHGVYGMAMNLEEDQVGAVLLGDYTEIREGDQVKRTGQILSVPVGDAMIGRVVNSLGEPIDDKGPIAASDRFPVERLAPGVIDRQPVREPMMTGLKAIDSMIPIGRGQRELIIGDRQTGKTAVALDTIINSKGRDLICVYCAIGQKRSSVAGVVQTLAKHGALDYTVVVVASASEPAPMLYLAPYAATAMAEYFRDNGKHALIIYDDLSKHAVAYRELSLLLRRPPGREAYPGDVFYLHSRLLERSSKLSKEKGGGSLTALPIIETQAGDVSAYIPTNVISITDGQIFLETDLFNSGVRPAVNVGLSVSRVGFSAAIKAIKQVGSTLKLDLAQYRDLAAFAQFGSDLDKATQNQLNRGQRLTELLKQPQFQPLSAEQQVMILFAGTQGFLDDIKVPYIRAFEDGLYKYLDASQRQLLNDIATKKALDDELRGRVKDALNEYKQNFLDEHEDARVKSETAQAAGKDKDEKAAATAGAGK</sequence>
<keyword id="KW-0066">ATP synthesis</keyword>
<keyword id="KW-0067">ATP-binding</keyword>
<keyword id="KW-0997">Cell inner membrane</keyword>
<keyword id="KW-1003">Cell membrane</keyword>
<keyword id="KW-0139">CF(1)</keyword>
<keyword id="KW-0375">Hydrogen ion transport</keyword>
<keyword id="KW-0406">Ion transport</keyword>
<keyword id="KW-0472">Membrane</keyword>
<keyword id="KW-0547">Nucleotide-binding</keyword>
<keyword id="KW-1185">Reference proteome</keyword>
<keyword id="KW-1278">Translocase</keyword>
<keyword id="KW-0813">Transport</keyword>
<feature type="chain" id="PRO_1000166510" description="ATP synthase subunit alpha">
    <location>
        <begin position="1"/>
        <end position="534"/>
    </location>
</feature>
<feature type="region of interest" description="Disordered" evidence="2">
    <location>
        <begin position="505"/>
        <end position="534"/>
    </location>
</feature>
<feature type="binding site" evidence="1">
    <location>
        <begin position="170"/>
        <end position="177"/>
    </location>
    <ligand>
        <name>ATP</name>
        <dbReference type="ChEBI" id="CHEBI:30616"/>
    </ligand>
</feature>
<feature type="site" description="Required for activity" evidence="1">
    <location>
        <position position="363"/>
    </location>
</feature>
<name>ATPA_ACIC5</name>
<gene>
    <name evidence="1" type="primary">atpA</name>
    <name type="ordered locus">ACP_1030</name>
</gene>
<comment type="function">
    <text evidence="1">Produces ATP from ADP in the presence of a proton gradient across the membrane. The alpha chain is a regulatory subunit.</text>
</comment>
<comment type="catalytic activity">
    <reaction evidence="1">
        <text>ATP + H2O + 4 H(+)(in) = ADP + phosphate + 5 H(+)(out)</text>
        <dbReference type="Rhea" id="RHEA:57720"/>
        <dbReference type="ChEBI" id="CHEBI:15377"/>
        <dbReference type="ChEBI" id="CHEBI:15378"/>
        <dbReference type="ChEBI" id="CHEBI:30616"/>
        <dbReference type="ChEBI" id="CHEBI:43474"/>
        <dbReference type="ChEBI" id="CHEBI:456216"/>
        <dbReference type="EC" id="7.1.2.2"/>
    </reaction>
</comment>
<comment type="subunit">
    <text evidence="1">F-type ATPases have 2 components, CF(1) - the catalytic core - and CF(0) - the membrane proton channel. CF(1) has five subunits: alpha(3), beta(3), gamma(1), delta(1), epsilon(1). CF(0) has three main subunits: a(1), b(2) and c(9-12). The alpha and beta chains form an alternating ring which encloses part of the gamma chain. CF(1) is attached to CF(0) by a central stalk formed by the gamma and epsilon chains, while a peripheral stalk is formed by the delta and b chains.</text>
</comment>
<comment type="subcellular location">
    <subcellularLocation>
        <location evidence="1">Cell inner membrane</location>
        <topology evidence="1">Peripheral membrane protein</topology>
    </subcellularLocation>
</comment>
<comment type="similarity">
    <text evidence="1">Belongs to the ATPase alpha/beta chains family.</text>
</comment>
<dbReference type="EC" id="7.1.2.2" evidence="1"/>
<dbReference type="EMBL" id="CP001472">
    <property type="protein sequence ID" value="ACO34139.1"/>
    <property type="molecule type" value="Genomic_DNA"/>
</dbReference>
<dbReference type="RefSeq" id="WP_015896189.1">
    <property type="nucleotide sequence ID" value="NC_012483.1"/>
</dbReference>
<dbReference type="SMR" id="C1F3N8"/>
<dbReference type="FunCoup" id="C1F3N8">
    <property type="interactions" value="391"/>
</dbReference>
<dbReference type="STRING" id="240015.ACP_1030"/>
<dbReference type="KEGG" id="aca:ACP_1030"/>
<dbReference type="eggNOG" id="COG0056">
    <property type="taxonomic scope" value="Bacteria"/>
</dbReference>
<dbReference type="HOGENOM" id="CLU_010091_2_1_0"/>
<dbReference type="InParanoid" id="C1F3N8"/>
<dbReference type="OrthoDB" id="9803053at2"/>
<dbReference type="Proteomes" id="UP000002207">
    <property type="component" value="Chromosome"/>
</dbReference>
<dbReference type="GO" id="GO:0005886">
    <property type="term" value="C:plasma membrane"/>
    <property type="evidence" value="ECO:0007669"/>
    <property type="project" value="UniProtKB-SubCell"/>
</dbReference>
<dbReference type="GO" id="GO:0045259">
    <property type="term" value="C:proton-transporting ATP synthase complex"/>
    <property type="evidence" value="ECO:0007669"/>
    <property type="project" value="UniProtKB-KW"/>
</dbReference>
<dbReference type="GO" id="GO:0043531">
    <property type="term" value="F:ADP binding"/>
    <property type="evidence" value="ECO:0007669"/>
    <property type="project" value="TreeGrafter"/>
</dbReference>
<dbReference type="GO" id="GO:0005524">
    <property type="term" value="F:ATP binding"/>
    <property type="evidence" value="ECO:0007669"/>
    <property type="project" value="UniProtKB-UniRule"/>
</dbReference>
<dbReference type="GO" id="GO:0046933">
    <property type="term" value="F:proton-transporting ATP synthase activity, rotational mechanism"/>
    <property type="evidence" value="ECO:0007669"/>
    <property type="project" value="UniProtKB-UniRule"/>
</dbReference>
<dbReference type="CDD" id="cd18113">
    <property type="entry name" value="ATP-synt_F1_alpha_C"/>
    <property type="match status" value="1"/>
</dbReference>
<dbReference type="CDD" id="cd18116">
    <property type="entry name" value="ATP-synt_F1_alpha_N"/>
    <property type="match status" value="1"/>
</dbReference>
<dbReference type="CDD" id="cd01132">
    <property type="entry name" value="F1-ATPase_alpha_CD"/>
    <property type="match status" value="1"/>
</dbReference>
<dbReference type="FunFam" id="1.20.150.20:FF:000001">
    <property type="entry name" value="ATP synthase subunit alpha"/>
    <property type="match status" value="1"/>
</dbReference>
<dbReference type="FunFam" id="2.40.30.20:FF:000001">
    <property type="entry name" value="ATP synthase subunit alpha"/>
    <property type="match status" value="1"/>
</dbReference>
<dbReference type="FunFam" id="3.40.50.300:FF:000002">
    <property type="entry name" value="ATP synthase subunit alpha"/>
    <property type="match status" value="1"/>
</dbReference>
<dbReference type="Gene3D" id="2.40.30.20">
    <property type="match status" value="1"/>
</dbReference>
<dbReference type="Gene3D" id="1.20.150.20">
    <property type="entry name" value="ATP synthase alpha/beta chain, C-terminal domain"/>
    <property type="match status" value="1"/>
</dbReference>
<dbReference type="Gene3D" id="3.40.50.300">
    <property type="entry name" value="P-loop containing nucleotide triphosphate hydrolases"/>
    <property type="match status" value="1"/>
</dbReference>
<dbReference type="HAMAP" id="MF_01346">
    <property type="entry name" value="ATP_synth_alpha_bact"/>
    <property type="match status" value="1"/>
</dbReference>
<dbReference type="InterPro" id="IPR023366">
    <property type="entry name" value="ATP_synth_asu-like_sf"/>
</dbReference>
<dbReference type="InterPro" id="IPR000793">
    <property type="entry name" value="ATP_synth_asu_C"/>
</dbReference>
<dbReference type="InterPro" id="IPR038376">
    <property type="entry name" value="ATP_synth_asu_C_sf"/>
</dbReference>
<dbReference type="InterPro" id="IPR033732">
    <property type="entry name" value="ATP_synth_F1_a_nt-bd_dom"/>
</dbReference>
<dbReference type="InterPro" id="IPR005294">
    <property type="entry name" value="ATP_synth_F1_asu"/>
</dbReference>
<dbReference type="InterPro" id="IPR020003">
    <property type="entry name" value="ATPase_a/bsu_AS"/>
</dbReference>
<dbReference type="InterPro" id="IPR004100">
    <property type="entry name" value="ATPase_F1/V1/A1_a/bsu_N"/>
</dbReference>
<dbReference type="InterPro" id="IPR036121">
    <property type="entry name" value="ATPase_F1/V1/A1_a/bsu_N_sf"/>
</dbReference>
<dbReference type="InterPro" id="IPR000194">
    <property type="entry name" value="ATPase_F1/V1/A1_a/bsu_nucl-bd"/>
</dbReference>
<dbReference type="InterPro" id="IPR027417">
    <property type="entry name" value="P-loop_NTPase"/>
</dbReference>
<dbReference type="NCBIfam" id="TIGR00962">
    <property type="entry name" value="atpA"/>
    <property type="match status" value="1"/>
</dbReference>
<dbReference type="NCBIfam" id="NF009884">
    <property type="entry name" value="PRK13343.1"/>
    <property type="match status" value="1"/>
</dbReference>
<dbReference type="PANTHER" id="PTHR48082">
    <property type="entry name" value="ATP SYNTHASE SUBUNIT ALPHA, MITOCHONDRIAL"/>
    <property type="match status" value="1"/>
</dbReference>
<dbReference type="PANTHER" id="PTHR48082:SF2">
    <property type="entry name" value="ATP SYNTHASE SUBUNIT ALPHA, MITOCHONDRIAL"/>
    <property type="match status" value="1"/>
</dbReference>
<dbReference type="Pfam" id="PF00006">
    <property type="entry name" value="ATP-synt_ab"/>
    <property type="match status" value="1"/>
</dbReference>
<dbReference type="Pfam" id="PF00306">
    <property type="entry name" value="ATP-synt_ab_C"/>
    <property type="match status" value="1"/>
</dbReference>
<dbReference type="Pfam" id="PF02874">
    <property type="entry name" value="ATP-synt_ab_N"/>
    <property type="match status" value="1"/>
</dbReference>
<dbReference type="PIRSF" id="PIRSF039088">
    <property type="entry name" value="F_ATPase_subunit_alpha"/>
    <property type="match status" value="1"/>
</dbReference>
<dbReference type="SUPFAM" id="SSF47917">
    <property type="entry name" value="C-terminal domain of alpha and beta subunits of F1 ATP synthase"/>
    <property type="match status" value="1"/>
</dbReference>
<dbReference type="SUPFAM" id="SSF50615">
    <property type="entry name" value="N-terminal domain of alpha and beta subunits of F1 ATP synthase"/>
    <property type="match status" value="1"/>
</dbReference>
<dbReference type="SUPFAM" id="SSF52540">
    <property type="entry name" value="P-loop containing nucleoside triphosphate hydrolases"/>
    <property type="match status" value="1"/>
</dbReference>
<dbReference type="PROSITE" id="PS00152">
    <property type="entry name" value="ATPASE_ALPHA_BETA"/>
    <property type="match status" value="1"/>
</dbReference>
<protein>
    <recommendedName>
        <fullName evidence="1">ATP synthase subunit alpha</fullName>
        <ecNumber evidence="1">7.1.2.2</ecNumber>
    </recommendedName>
    <alternativeName>
        <fullName evidence="1">ATP synthase F1 sector subunit alpha</fullName>
    </alternativeName>
    <alternativeName>
        <fullName evidence="1">F-ATPase subunit alpha</fullName>
    </alternativeName>
</protein>
<proteinExistence type="inferred from homology"/>
<evidence type="ECO:0000255" key="1">
    <source>
        <dbReference type="HAMAP-Rule" id="MF_01346"/>
    </source>
</evidence>
<evidence type="ECO:0000256" key="2">
    <source>
        <dbReference type="SAM" id="MobiDB-lite"/>
    </source>
</evidence>
<organism>
    <name type="scientific">Acidobacterium capsulatum (strain ATCC 51196 / DSM 11244 / BCRC 80197 / JCM 7670 / NBRC 15755 / NCIMB 13165 / 161)</name>
    <dbReference type="NCBI Taxonomy" id="240015"/>
    <lineage>
        <taxon>Bacteria</taxon>
        <taxon>Pseudomonadati</taxon>
        <taxon>Acidobacteriota</taxon>
        <taxon>Terriglobia</taxon>
        <taxon>Terriglobales</taxon>
        <taxon>Acidobacteriaceae</taxon>
        <taxon>Acidobacterium</taxon>
    </lineage>
</organism>
<reference key="1">
    <citation type="journal article" date="2009" name="Appl. Environ. Microbiol.">
        <title>Three genomes from the phylum Acidobacteria provide insight into the lifestyles of these microorganisms in soils.</title>
        <authorList>
            <person name="Ward N.L."/>
            <person name="Challacombe J.F."/>
            <person name="Janssen P.H."/>
            <person name="Henrissat B."/>
            <person name="Coutinho P.M."/>
            <person name="Wu M."/>
            <person name="Xie G."/>
            <person name="Haft D.H."/>
            <person name="Sait M."/>
            <person name="Badger J."/>
            <person name="Barabote R.D."/>
            <person name="Bradley B."/>
            <person name="Brettin T.S."/>
            <person name="Brinkac L.M."/>
            <person name="Bruce D."/>
            <person name="Creasy T."/>
            <person name="Daugherty S.C."/>
            <person name="Davidsen T.M."/>
            <person name="DeBoy R.T."/>
            <person name="Detter J.C."/>
            <person name="Dodson R.J."/>
            <person name="Durkin A.S."/>
            <person name="Ganapathy A."/>
            <person name="Gwinn-Giglio M."/>
            <person name="Han C.S."/>
            <person name="Khouri H."/>
            <person name="Kiss H."/>
            <person name="Kothari S.P."/>
            <person name="Madupu R."/>
            <person name="Nelson K.E."/>
            <person name="Nelson W.C."/>
            <person name="Paulsen I."/>
            <person name="Penn K."/>
            <person name="Ren Q."/>
            <person name="Rosovitz M.J."/>
            <person name="Selengut J.D."/>
            <person name="Shrivastava S."/>
            <person name="Sullivan S.A."/>
            <person name="Tapia R."/>
            <person name="Thompson L.S."/>
            <person name="Watkins K.L."/>
            <person name="Yang Q."/>
            <person name="Yu C."/>
            <person name="Zafar N."/>
            <person name="Zhou L."/>
            <person name="Kuske C.R."/>
        </authorList>
    </citation>
    <scope>NUCLEOTIDE SEQUENCE [LARGE SCALE GENOMIC DNA]</scope>
    <source>
        <strain>ATCC 51196 / DSM 11244 / BCRC 80197 / JCM 7670 / NBRC 15755 / NCIMB 13165 / 161</strain>
    </source>
</reference>